<keyword id="KW-0488">Methylation</keyword>
<keyword id="KW-0687">Ribonucleoprotein</keyword>
<keyword id="KW-0689">Ribosomal protein</keyword>
<keyword id="KW-0694">RNA-binding</keyword>
<keyword id="KW-0699">rRNA-binding</keyword>
<keyword id="KW-0820">tRNA-binding</keyword>
<name>RS12_LACLS</name>
<feature type="chain" id="PRO_0000295991" description="Small ribosomal subunit protein uS12">
    <location>
        <begin position="1"/>
        <end position="137"/>
    </location>
</feature>
<feature type="region of interest" description="Disordered" evidence="3">
    <location>
        <begin position="1"/>
        <end position="57"/>
    </location>
</feature>
<feature type="modified residue" description="3-methylthioaspartic acid" evidence="1">
    <location>
        <position position="102"/>
    </location>
</feature>
<dbReference type="EMBL" id="CP000425">
    <property type="protein sequence ID" value="ABJ74014.1"/>
    <property type="molecule type" value="Genomic_DNA"/>
</dbReference>
<dbReference type="RefSeq" id="WP_003129874.1">
    <property type="nucleotide sequence ID" value="NC_008527.1"/>
</dbReference>
<dbReference type="SMR" id="Q02VK8"/>
<dbReference type="GeneID" id="89634664"/>
<dbReference type="KEGG" id="llc:LACR_2597"/>
<dbReference type="HOGENOM" id="CLU_104295_1_2_9"/>
<dbReference type="Proteomes" id="UP000000240">
    <property type="component" value="Chromosome"/>
</dbReference>
<dbReference type="GO" id="GO:0015935">
    <property type="term" value="C:small ribosomal subunit"/>
    <property type="evidence" value="ECO:0007669"/>
    <property type="project" value="InterPro"/>
</dbReference>
<dbReference type="GO" id="GO:0019843">
    <property type="term" value="F:rRNA binding"/>
    <property type="evidence" value="ECO:0007669"/>
    <property type="project" value="UniProtKB-UniRule"/>
</dbReference>
<dbReference type="GO" id="GO:0003735">
    <property type="term" value="F:structural constituent of ribosome"/>
    <property type="evidence" value="ECO:0007669"/>
    <property type="project" value="InterPro"/>
</dbReference>
<dbReference type="GO" id="GO:0000049">
    <property type="term" value="F:tRNA binding"/>
    <property type="evidence" value="ECO:0007669"/>
    <property type="project" value="UniProtKB-UniRule"/>
</dbReference>
<dbReference type="GO" id="GO:0006412">
    <property type="term" value="P:translation"/>
    <property type="evidence" value="ECO:0007669"/>
    <property type="project" value="UniProtKB-UniRule"/>
</dbReference>
<dbReference type="CDD" id="cd03368">
    <property type="entry name" value="Ribosomal_S12"/>
    <property type="match status" value="1"/>
</dbReference>
<dbReference type="FunFam" id="2.40.50.140:FF:000001">
    <property type="entry name" value="30S ribosomal protein S12"/>
    <property type="match status" value="1"/>
</dbReference>
<dbReference type="Gene3D" id="2.40.50.140">
    <property type="entry name" value="Nucleic acid-binding proteins"/>
    <property type="match status" value="1"/>
</dbReference>
<dbReference type="HAMAP" id="MF_00403_B">
    <property type="entry name" value="Ribosomal_uS12_B"/>
    <property type="match status" value="1"/>
</dbReference>
<dbReference type="InterPro" id="IPR012340">
    <property type="entry name" value="NA-bd_OB-fold"/>
</dbReference>
<dbReference type="InterPro" id="IPR006032">
    <property type="entry name" value="Ribosomal_uS12"/>
</dbReference>
<dbReference type="InterPro" id="IPR005679">
    <property type="entry name" value="Ribosomal_uS12_bac"/>
</dbReference>
<dbReference type="NCBIfam" id="TIGR00981">
    <property type="entry name" value="rpsL_bact"/>
    <property type="match status" value="1"/>
</dbReference>
<dbReference type="PANTHER" id="PTHR11652">
    <property type="entry name" value="30S RIBOSOMAL PROTEIN S12 FAMILY MEMBER"/>
    <property type="match status" value="1"/>
</dbReference>
<dbReference type="Pfam" id="PF00164">
    <property type="entry name" value="Ribosom_S12_S23"/>
    <property type="match status" value="1"/>
</dbReference>
<dbReference type="PIRSF" id="PIRSF002133">
    <property type="entry name" value="Ribosomal_S12/S23"/>
    <property type="match status" value="1"/>
</dbReference>
<dbReference type="PRINTS" id="PR01034">
    <property type="entry name" value="RIBOSOMALS12"/>
</dbReference>
<dbReference type="SUPFAM" id="SSF50249">
    <property type="entry name" value="Nucleic acid-binding proteins"/>
    <property type="match status" value="1"/>
</dbReference>
<dbReference type="PROSITE" id="PS00055">
    <property type="entry name" value="RIBOSOMAL_S12"/>
    <property type="match status" value="1"/>
</dbReference>
<protein>
    <recommendedName>
        <fullName evidence="2">Small ribosomal subunit protein uS12</fullName>
    </recommendedName>
    <alternativeName>
        <fullName evidence="4">30S ribosomal protein S12</fullName>
    </alternativeName>
</protein>
<organism>
    <name type="scientific">Lactococcus lactis subsp. cremoris (strain SK11)</name>
    <dbReference type="NCBI Taxonomy" id="272622"/>
    <lineage>
        <taxon>Bacteria</taxon>
        <taxon>Bacillati</taxon>
        <taxon>Bacillota</taxon>
        <taxon>Bacilli</taxon>
        <taxon>Lactobacillales</taxon>
        <taxon>Streptococcaceae</taxon>
        <taxon>Lactococcus</taxon>
        <taxon>Lactococcus cremoris subsp. cremoris</taxon>
    </lineage>
</organism>
<comment type="function">
    <text evidence="2">With S4 and S5 plays an important role in translational accuracy.</text>
</comment>
<comment type="function">
    <text evidence="2">Interacts with and stabilizes bases of the 16S rRNA that are involved in tRNA selection in the A site and with the mRNA backbone. Located at the interface of the 30S and 50S subunits, it traverses the body of the 30S subunit contacting proteins on the other side and probably holding the rRNA structure together. The combined cluster of proteins S8, S12 and S17 appears to hold together the shoulder and platform of the 30S subunit.</text>
</comment>
<comment type="subunit">
    <text evidence="2">Part of the 30S ribosomal subunit. Contacts proteins S8 and S17. May interact with IF1 in the 30S initiation complex.</text>
</comment>
<comment type="similarity">
    <text evidence="2">Belongs to the universal ribosomal protein uS12 family.</text>
</comment>
<sequence>MPTINQLVRKPRRAQVTKSKSPAMNVGYNSRKKVQTKLASPQKRGVATRVGTMTPKKPNSALRKFARVRLSNLMEVTAYIPGIGHNLQEHSVVLLRGGRVKDLPGVRYHIVRGALDTAGVADRKQSRSKYGAKKPKA</sequence>
<proteinExistence type="inferred from homology"/>
<reference key="1">
    <citation type="journal article" date="2006" name="Proc. Natl. Acad. Sci. U.S.A.">
        <title>Comparative genomics of the lactic acid bacteria.</title>
        <authorList>
            <person name="Makarova K.S."/>
            <person name="Slesarev A."/>
            <person name="Wolf Y.I."/>
            <person name="Sorokin A."/>
            <person name="Mirkin B."/>
            <person name="Koonin E.V."/>
            <person name="Pavlov A."/>
            <person name="Pavlova N."/>
            <person name="Karamychev V."/>
            <person name="Polouchine N."/>
            <person name="Shakhova V."/>
            <person name="Grigoriev I."/>
            <person name="Lou Y."/>
            <person name="Rohksar D."/>
            <person name="Lucas S."/>
            <person name="Huang K."/>
            <person name="Goodstein D.M."/>
            <person name="Hawkins T."/>
            <person name="Plengvidhya V."/>
            <person name="Welker D."/>
            <person name="Hughes J."/>
            <person name="Goh Y."/>
            <person name="Benson A."/>
            <person name="Baldwin K."/>
            <person name="Lee J.-H."/>
            <person name="Diaz-Muniz I."/>
            <person name="Dosti B."/>
            <person name="Smeianov V."/>
            <person name="Wechter W."/>
            <person name="Barabote R."/>
            <person name="Lorca G."/>
            <person name="Altermann E."/>
            <person name="Barrangou R."/>
            <person name="Ganesan B."/>
            <person name="Xie Y."/>
            <person name="Rawsthorne H."/>
            <person name="Tamir D."/>
            <person name="Parker C."/>
            <person name="Breidt F."/>
            <person name="Broadbent J.R."/>
            <person name="Hutkins R."/>
            <person name="O'Sullivan D."/>
            <person name="Steele J."/>
            <person name="Unlu G."/>
            <person name="Saier M.H. Jr."/>
            <person name="Klaenhammer T."/>
            <person name="Richardson P."/>
            <person name="Kozyavkin S."/>
            <person name="Weimer B.C."/>
            <person name="Mills D.A."/>
        </authorList>
    </citation>
    <scope>NUCLEOTIDE SEQUENCE [LARGE SCALE GENOMIC DNA]</scope>
    <source>
        <strain>SK11</strain>
    </source>
</reference>
<accession>Q02VK8</accession>
<evidence type="ECO:0000250" key="1"/>
<evidence type="ECO:0000255" key="2">
    <source>
        <dbReference type="HAMAP-Rule" id="MF_00403"/>
    </source>
</evidence>
<evidence type="ECO:0000256" key="3">
    <source>
        <dbReference type="SAM" id="MobiDB-lite"/>
    </source>
</evidence>
<evidence type="ECO:0000305" key="4"/>
<gene>
    <name evidence="2" type="primary">rpsL</name>
    <name type="ordered locus">LACR_2597</name>
</gene>